<keyword id="KW-0067">ATP-binding</keyword>
<keyword id="KW-0997">Cell inner membrane</keyword>
<keyword id="KW-1003">Cell membrane</keyword>
<keyword id="KW-0378">Hydrolase</keyword>
<keyword id="KW-0472">Membrane</keyword>
<keyword id="KW-0479">Metal-binding</keyword>
<keyword id="KW-0482">Metalloprotease</keyword>
<keyword id="KW-0547">Nucleotide-binding</keyword>
<keyword id="KW-0645">Protease</keyword>
<keyword id="KW-0812">Transmembrane</keyword>
<keyword id="KW-1133">Transmembrane helix</keyword>
<keyword id="KW-0862">Zinc</keyword>
<name>FTSH_HELFC</name>
<protein>
    <recommendedName>
        <fullName evidence="1">ATP-dependent zinc metalloprotease FtsH</fullName>
        <ecNumber evidence="1">3.4.24.-</ecNumber>
    </recommendedName>
</protein>
<proteinExistence type="inferred from homology"/>
<gene>
    <name evidence="1" type="primary">ftsH</name>
    <name type="ordered locus">Hfelis_12570</name>
</gene>
<reference key="1">
    <citation type="journal article" date="1998" name="J. Bacteriol.">
        <title>Properties of the P-type ATPases encoded by the copAP operons of Helicobacter pylori and Helicobacter felis.</title>
        <authorList>
            <person name="Bayle D."/>
            <person name="Waengler S."/>
            <person name="Weitzenegger T."/>
            <person name="Steinhilber W."/>
            <person name="Volz J."/>
            <person name="Przybylski M."/>
            <person name="Schaefer K.P."/>
            <person name="Sachs G."/>
            <person name="Melchers K."/>
        </authorList>
    </citation>
    <scope>NUCLEOTIDE SEQUENCE [GENOMIC DNA]</scope>
    <source>
        <strain>ATCC 49179 / CCUG 28539 / NCTC 12436 / CS1</strain>
    </source>
</reference>
<reference key="2">
    <citation type="submission" date="2010-12" db="EMBL/GenBank/DDBJ databases">
        <title>Comparative whole genome analysis of the carcinogenic bacterial pathogen Helicobacter felis.</title>
        <authorList>
            <person name="Arnold A."/>
            <person name="Zigova Z."/>
            <person name="Lawley T."/>
            <person name="Falkow S."/>
            <person name="Bentley S."/>
            <person name="Aslett M."/>
            <person name="Muller A."/>
        </authorList>
    </citation>
    <scope>NUCLEOTIDE SEQUENCE [LARGE SCALE GENOMIC DNA]</scope>
    <source>
        <strain>ATCC 49179 / CCUG 28539 / NCTC 12436 / CS1</strain>
    </source>
</reference>
<evidence type="ECO:0000255" key="1">
    <source>
        <dbReference type="HAMAP-Rule" id="MF_01458"/>
    </source>
</evidence>
<sequence length="638" mass="70245">MDNNHKGPNDPNSKKPLLQNPLLLIAIFGIIIFVAMRVMNSDEGFGDRFLSTSTKNISYHEMKELIEKKEVDSVSIGQTLIKAISKEGNNKTIYVAKRVPDLSLVPLLDSQKINYSGFSESNFFADILGWLLPVLVILGLWMFMASRMQKNMGGGIFGMGSSKKLINAEKPKVRFNDMAGNEEAKEEVVEIVDFLKYPDRYASLGAKIPKGVLLVGPPGTGKTLLAKAVAGEASVPFFSMGGSSFIEMFVGLGASRVRDLFDIAKKEAPSIIFIDEIDAIGKSRAAGGMISGNDEREQTLNQLLAEMDGFGSENAPVIVLAATNRPEILDPALLRPGRFDRQVLVDKPDFKGRVEILKVHIKPVKLANDVDLQEIAKLTAGLAGADLANIINEAALLAGRNNQKEVKQQHLKEAVERGIAGLEKKSRRISPKEKKIVAYHESGHAVISEMTKGSARVNKVSIIPRGMAALGYTLNTPEENKYLMQKHELIAEIDVLLGGRAAEDVFLQEISTGASNDLERATDIIKGMVSYYGMSDVSGLMVLEKQRNSFLGGGFGSGREFSEKMAEEMDSFIKNLLEERYVHVKQTLSDYKDAIEVMVNELFEKEVITGERVREIISEYEVSHNLQTRLVPLEEHAS</sequence>
<dbReference type="EC" id="3.4.24.-" evidence="1"/>
<dbReference type="EMBL" id="AJ001932">
    <property type="protein sequence ID" value="CAA05102.1"/>
    <property type="molecule type" value="Genomic_DNA"/>
</dbReference>
<dbReference type="EMBL" id="FQ670179">
    <property type="protein sequence ID" value="CBY83341.1"/>
    <property type="molecule type" value="Genomic_DNA"/>
</dbReference>
<dbReference type="PIR" id="T47267">
    <property type="entry name" value="T47267"/>
</dbReference>
<dbReference type="RefSeq" id="WP_013469705.1">
    <property type="nucleotide sequence ID" value="NC_014810.2"/>
</dbReference>
<dbReference type="SMR" id="O32617"/>
<dbReference type="STRING" id="936155.HFELIS_12570"/>
<dbReference type="GeneID" id="36133586"/>
<dbReference type="KEGG" id="hfe:HFELIS_12570"/>
<dbReference type="eggNOG" id="COG0465">
    <property type="taxonomic scope" value="Bacteria"/>
</dbReference>
<dbReference type="HOGENOM" id="CLU_000688_16_2_7"/>
<dbReference type="OrthoDB" id="9809379at2"/>
<dbReference type="Proteomes" id="UP000007934">
    <property type="component" value="Chromosome"/>
</dbReference>
<dbReference type="GO" id="GO:0005886">
    <property type="term" value="C:plasma membrane"/>
    <property type="evidence" value="ECO:0007669"/>
    <property type="project" value="UniProtKB-SubCell"/>
</dbReference>
<dbReference type="GO" id="GO:0005524">
    <property type="term" value="F:ATP binding"/>
    <property type="evidence" value="ECO:0007669"/>
    <property type="project" value="UniProtKB-UniRule"/>
</dbReference>
<dbReference type="GO" id="GO:0016887">
    <property type="term" value="F:ATP hydrolysis activity"/>
    <property type="evidence" value="ECO:0007669"/>
    <property type="project" value="UniProtKB-UniRule"/>
</dbReference>
<dbReference type="GO" id="GO:0004176">
    <property type="term" value="F:ATP-dependent peptidase activity"/>
    <property type="evidence" value="ECO:0007669"/>
    <property type="project" value="InterPro"/>
</dbReference>
<dbReference type="GO" id="GO:0004222">
    <property type="term" value="F:metalloendopeptidase activity"/>
    <property type="evidence" value="ECO:0007669"/>
    <property type="project" value="InterPro"/>
</dbReference>
<dbReference type="GO" id="GO:0008270">
    <property type="term" value="F:zinc ion binding"/>
    <property type="evidence" value="ECO:0007669"/>
    <property type="project" value="UniProtKB-UniRule"/>
</dbReference>
<dbReference type="GO" id="GO:0030163">
    <property type="term" value="P:protein catabolic process"/>
    <property type="evidence" value="ECO:0007669"/>
    <property type="project" value="UniProtKB-UniRule"/>
</dbReference>
<dbReference type="GO" id="GO:0006508">
    <property type="term" value="P:proteolysis"/>
    <property type="evidence" value="ECO:0007669"/>
    <property type="project" value="UniProtKB-KW"/>
</dbReference>
<dbReference type="CDD" id="cd19501">
    <property type="entry name" value="RecA-like_FtsH"/>
    <property type="match status" value="1"/>
</dbReference>
<dbReference type="FunFam" id="1.10.8.60:FF:000001">
    <property type="entry name" value="ATP-dependent zinc metalloprotease FtsH"/>
    <property type="match status" value="1"/>
</dbReference>
<dbReference type="FunFam" id="1.20.58.760:FF:000001">
    <property type="entry name" value="ATP-dependent zinc metalloprotease FtsH"/>
    <property type="match status" value="1"/>
</dbReference>
<dbReference type="FunFam" id="3.40.50.300:FF:000001">
    <property type="entry name" value="ATP-dependent zinc metalloprotease FtsH"/>
    <property type="match status" value="1"/>
</dbReference>
<dbReference type="Gene3D" id="1.10.8.60">
    <property type="match status" value="1"/>
</dbReference>
<dbReference type="Gene3D" id="3.30.720.210">
    <property type="match status" value="1"/>
</dbReference>
<dbReference type="Gene3D" id="3.40.50.300">
    <property type="entry name" value="P-loop containing nucleotide triphosphate hydrolases"/>
    <property type="match status" value="1"/>
</dbReference>
<dbReference type="Gene3D" id="1.20.58.760">
    <property type="entry name" value="Peptidase M41"/>
    <property type="match status" value="1"/>
</dbReference>
<dbReference type="HAMAP" id="MF_01458">
    <property type="entry name" value="FtsH"/>
    <property type="match status" value="1"/>
</dbReference>
<dbReference type="InterPro" id="IPR003593">
    <property type="entry name" value="AAA+_ATPase"/>
</dbReference>
<dbReference type="InterPro" id="IPR041569">
    <property type="entry name" value="AAA_lid_3"/>
</dbReference>
<dbReference type="InterPro" id="IPR050928">
    <property type="entry name" value="ATP-dep_Zn_Metalloprotease"/>
</dbReference>
<dbReference type="InterPro" id="IPR003959">
    <property type="entry name" value="ATPase_AAA_core"/>
</dbReference>
<dbReference type="InterPro" id="IPR003960">
    <property type="entry name" value="ATPase_AAA_CS"/>
</dbReference>
<dbReference type="InterPro" id="IPR005936">
    <property type="entry name" value="FtsH"/>
</dbReference>
<dbReference type="InterPro" id="IPR027417">
    <property type="entry name" value="P-loop_NTPase"/>
</dbReference>
<dbReference type="InterPro" id="IPR011546">
    <property type="entry name" value="Pept_M41_FtsH_extracell"/>
</dbReference>
<dbReference type="InterPro" id="IPR000642">
    <property type="entry name" value="Peptidase_M41"/>
</dbReference>
<dbReference type="InterPro" id="IPR037219">
    <property type="entry name" value="Peptidase_M41-like"/>
</dbReference>
<dbReference type="NCBIfam" id="TIGR01241">
    <property type="entry name" value="FtsH_fam"/>
    <property type="match status" value="1"/>
</dbReference>
<dbReference type="PANTHER" id="PTHR43655:SF2">
    <property type="entry name" value="AFG3 LIKE MATRIX AAA PEPTIDASE SUBUNIT 2, ISOFORM A"/>
    <property type="match status" value="1"/>
</dbReference>
<dbReference type="PANTHER" id="PTHR43655">
    <property type="entry name" value="ATP-DEPENDENT PROTEASE"/>
    <property type="match status" value="1"/>
</dbReference>
<dbReference type="Pfam" id="PF00004">
    <property type="entry name" value="AAA"/>
    <property type="match status" value="1"/>
</dbReference>
<dbReference type="Pfam" id="PF17862">
    <property type="entry name" value="AAA_lid_3"/>
    <property type="match status" value="1"/>
</dbReference>
<dbReference type="Pfam" id="PF06480">
    <property type="entry name" value="FtsH_ext"/>
    <property type="match status" value="1"/>
</dbReference>
<dbReference type="Pfam" id="PF01434">
    <property type="entry name" value="Peptidase_M41"/>
    <property type="match status" value="1"/>
</dbReference>
<dbReference type="SMART" id="SM00382">
    <property type="entry name" value="AAA"/>
    <property type="match status" value="1"/>
</dbReference>
<dbReference type="SUPFAM" id="SSF140990">
    <property type="entry name" value="FtsH protease domain-like"/>
    <property type="match status" value="1"/>
</dbReference>
<dbReference type="SUPFAM" id="SSF52540">
    <property type="entry name" value="P-loop containing nucleoside triphosphate hydrolases"/>
    <property type="match status" value="1"/>
</dbReference>
<dbReference type="PROSITE" id="PS00674">
    <property type="entry name" value="AAA"/>
    <property type="match status" value="1"/>
</dbReference>
<organism>
    <name type="scientific">Helicobacter felis (strain ATCC 49179 / CCUG 28539 / NCTC 12436 / CS1)</name>
    <dbReference type="NCBI Taxonomy" id="936155"/>
    <lineage>
        <taxon>Bacteria</taxon>
        <taxon>Pseudomonadati</taxon>
        <taxon>Campylobacterota</taxon>
        <taxon>Epsilonproteobacteria</taxon>
        <taxon>Campylobacterales</taxon>
        <taxon>Helicobacteraceae</taxon>
        <taxon>Helicobacter</taxon>
    </lineage>
</organism>
<feature type="chain" id="PRO_0000084635" description="ATP-dependent zinc metalloprotease FtsH">
    <location>
        <begin position="1"/>
        <end position="638"/>
    </location>
</feature>
<feature type="topological domain" description="Cytoplasmic" evidence="1">
    <location>
        <begin position="1"/>
        <end position="15"/>
    </location>
</feature>
<feature type="transmembrane region" description="Helical" evidence="1">
    <location>
        <begin position="16"/>
        <end position="36"/>
    </location>
</feature>
<feature type="topological domain" description="Periplasmic" evidence="1">
    <location>
        <begin position="37"/>
        <end position="122"/>
    </location>
</feature>
<feature type="transmembrane region" description="Helical" evidence="1">
    <location>
        <begin position="123"/>
        <end position="143"/>
    </location>
</feature>
<feature type="topological domain" description="Cytoplasmic" evidence="1">
    <location>
        <begin position="144"/>
        <end position="638"/>
    </location>
</feature>
<feature type="active site" evidence="1">
    <location>
        <position position="441"/>
    </location>
</feature>
<feature type="binding site" evidence="1">
    <location>
        <begin position="216"/>
        <end position="223"/>
    </location>
    <ligand>
        <name>ATP</name>
        <dbReference type="ChEBI" id="CHEBI:30616"/>
    </ligand>
</feature>
<feature type="binding site" evidence="1">
    <location>
        <position position="440"/>
    </location>
    <ligand>
        <name>Zn(2+)</name>
        <dbReference type="ChEBI" id="CHEBI:29105"/>
        <note>catalytic</note>
    </ligand>
</feature>
<feature type="binding site" evidence="1">
    <location>
        <position position="444"/>
    </location>
    <ligand>
        <name>Zn(2+)</name>
        <dbReference type="ChEBI" id="CHEBI:29105"/>
        <note>catalytic</note>
    </ligand>
</feature>
<feature type="binding site" evidence="1">
    <location>
        <position position="517"/>
    </location>
    <ligand>
        <name>Zn(2+)</name>
        <dbReference type="ChEBI" id="CHEBI:29105"/>
        <note>catalytic</note>
    </ligand>
</feature>
<accession>O32617</accession>
<accession>E7A9G4</accession>
<comment type="function">
    <text evidence="1">Acts as a processive, ATP-dependent zinc metallopeptidase for both cytoplasmic and membrane proteins. Plays a role in the quality control of integral membrane proteins.</text>
</comment>
<comment type="cofactor">
    <cofactor evidence="1">
        <name>Zn(2+)</name>
        <dbReference type="ChEBI" id="CHEBI:29105"/>
    </cofactor>
    <text evidence="1">Binds 1 zinc ion per subunit.</text>
</comment>
<comment type="subunit">
    <text evidence="1">Homohexamer.</text>
</comment>
<comment type="subcellular location">
    <subcellularLocation>
        <location evidence="1">Cell inner membrane</location>
        <topology evidence="1">Multi-pass membrane protein</topology>
        <orientation evidence="1">Cytoplasmic side</orientation>
    </subcellularLocation>
</comment>
<comment type="similarity">
    <text evidence="1">In the central section; belongs to the AAA ATPase family.</text>
</comment>
<comment type="similarity">
    <text evidence="1">In the C-terminal section; belongs to the peptidase M41 family.</text>
</comment>